<reference key="1">
    <citation type="journal article" date="2003" name="Nature">
        <title>Comparative analyses of multi-species sequences from targeted genomic regions.</title>
        <authorList>
            <person name="Thomas J.W."/>
            <person name="Touchman J.W."/>
            <person name="Blakesley R.W."/>
            <person name="Bouffard G.G."/>
            <person name="Beckstrom-Sternberg S.M."/>
            <person name="Margulies E.H."/>
            <person name="Blanchette M."/>
            <person name="Siepel A.C."/>
            <person name="Thomas P.J."/>
            <person name="McDowell J.C."/>
            <person name="Maskeri B."/>
            <person name="Hansen N.F."/>
            <person name="Schwartz M.S."/>
            <person name="Weber R.J."/>
            <person name="Kent W.J."/>
            <person name="Karolchik D."/>
            <person name="Bruen T.C."/>
            <person name="Bevan R."/>
            <person name="Cutler D.J."/>
            <person name="Schwartz S."/>
            <person name="Elnitski L."/>
            <person name="Idol J.R."/>
            <person name="Prasad A.B."/>
            <person name="Lee-Lin S.-Q."/>
            <person name="Maduro V.V.B."/>
            <person name="Summers T.J."/>
            <person name="Portnoy M.E."/>
            <person name="Dietrich N.L."/>
            <person name="Akhter N."/>
            <person name="Ayele K."/>
            <person name="Benjamin B."/>
            <person name="Cariaga K."/>
            <person name="Brinkley C.P."/>
            <person name="Brooks S.Y."/>
            <person name="Granite S."/>
            <person name="Guan X."/>
            <person name="Gupta J."/>
            <person name="Haghighi P."/>
            <person name="Ho S.-L."/>
            <person name="Huang M.C."/>
            <person name="Karlins E."/>
            <person name="Laric P.L."/>
            <person name="Legaspi R."/>
            <person name="Lim M.J."/>
            <person name="Maduro Q.L."/>
            <person name="Masiello C.A."/>
            <person name="Mastrian S.D."/>
            <person name="McCloskey J.C."/>
            <person name="Pearson R."/>
            <person name="Stantripop S."/>
            <person name="Tiongson E.E."/>
            <person name="Tran J.T."/>
            <person name="Tsurgeon C."/>
            <person name="Vogt J.L."/>
            <person name="Walker M.A."/>
            <person name="Wetherby K.D."/>
            <person name="Wiggins L.S."/>
            <person name="Young A.C."/>
            <person name="Zhang L.-H."/>
            <person name="Osoegawa K."/>
            <person name="Zhu B."/>
            <person name="Zhao B."/>
            <person name="Shu C.L."/>
            <person name="De Jong P.J."/>
            <person name="Lawrence C.E."/>
            <person name="Smit A.F."/>
            <person name="Chakravarti A."/>
            <person name="Haussler D."/>
            <person name="Green P."/>
            <person name="Miller W."/>
            <person name="Green E.D."/>
        </authorList>
    </citation>
    <scope>NUCLEOTIDE SEQUENCE [LARGE SCALE GENOMIC DNA]</scope>
</reference>
<name>CAV2_PAPAN</name>
<gene>
    <name type="primary">CAV2</name>
</gene>
<accession>A0M8R5</accession>
<evidence type="ECO:0000250" key="1"/>
<evidence type="ECO:0000250" key="2">
    <source>
        <dbReference type="UniProtKB" id="P51636"/>
    </source>
</evidence>
<evidence type="ECO:0000250" key="3">
    <source>
        <dbReference type="UniProtKB" id="Q9WVC3"/>
    </source>
</evidence>
<evidence type="ECO:0000255" key="4"/>
<evidence type="ECO:0000305" key="5"/>
<keyword id="KW-1003">Cell membrane</keyword>
<keyword id="KW-0963">Cytoplasm</keyword>
<keyword id="KW-0333">Golgi apparatus</keyword>
<keyword id="KW-0472">Membrane</keyword>
<keyword id="KW-0539">Nucleus</keyword>
<keyword id="KW-0597">Phosphoprotein</keyword>
<keyword id="KW-1185">Reference proteome</keyword>
<organism>
    <name type="scientific">Papio anubis</name>
    <name type="common">Olive baboon</name>
    <dbReference type="NCBI Taxonomy" id="9555"/>
    <lineage>
        <taxon>Eukaryota</taxon>
        <taxon>Metazoa</taxon>
        <taxon>Chordata</taxon>
        <taxon>Craniata</taxon>
        <taxon>Vertebrata</taxon>
        <taxon>Euteleostomi</taxon>
        <taxon>Mammalia</taxon>
        <taxon>Eutheria</taxon>
        <taxon>Euarchontoglires</taxon>
        <taxon>Primates</taxon>
        <taxon>Haplorrhini</taxon>
        <taxon>Catarrhini</taxon>
        <taxon>Cercopithecidae</taxon>
        <taxon>Cercopithecinae</taxon>
        <taxon>Papio</taxon>
    </lineage>
</organism>
<sequence length="162" mass="18265">MGLETEKADVQLFMDDDSYSHHSGLEYADPEKFADSGQDRDPHRLNSHLKLGFEDVIAEPVTTHSFDKVWICSHALFEISKYVMYKFLTVFLAIPLAFIAGILFATLSCLHIWILMPFVKTCLMVLPSVQTIWKSVTDVFIAPLCTSIGRSFSSVSLQLSQD</sequence>
<proteinExistence type="inferred from homology"/>
<dbReference type="EMBL" id="DP000233">
    <property type="protein sequence ID" value="AAR16219.1"/>
    <property type="molecule type" value="Genomic_DNA"/>
</dbReference>
<dbReference type="RefSeq" id="NP_001162183.1">
    <property type="nucleotide sequence ID" value="NM_001168712.1"/>
</dbReference>
<dbReference type="SMR" id="A0M8R5"/>
<dbReference type="STRING" id="9555.ENSPANP00000016609"/>
<dbReference type="GeneID" id="100126667"/>
<dbReference type="KEGG" id="panu:100126667"/>
<dbReference type="CTD" id="858"/>
<dbReference type="eggNOG" id="ENOG502RZYX">
    <property type="taxonomic scope" value="Eukaryota"/>
</dbReference>
<dbReference type="OrthoDB" id="2962at314294"/>
<dbReference type="Proteomes" id="UP000028761">
    <property type="component" value="Unplaced"/>
</dbReference>
<dbReference type="GO" id="GO:0005901">
    <property type="term" value="C:caveola"/>
    <property type="evidence" value="ECO:0000250"/>
    <property type="project" value="UniProtKB"/>
</dbReference>
<dbReference type="GO" id="GO:0031410">
    <property type="term" value="C:cytoplasmic vesicle"/>
    <property type="evidence" value="ECO:0007669"/>
    <property type="project" value="TreeGrafter"/>
</dbReference>
<dbReference type="GO" id="GO:0005925">
    <property type="term" value="C:focal adhesion"/>
    <property type="evidence" value="ECO:0007669"/>
    <property type="project" value="TreeGrafter"/>
</dbReference>
<dbReference type="GO" id="GO:0000139">
    <property type="term" value="C:Golgi membrane"/>
    <property type="evidence" value="ECO:0007669"/>
    <property type="project" value="UniProtKB-SubCell"/>
</dbReference>
<dbReference type="GO" id="GO:0005634">
    <property type="term" value="C:nucleus"/>
    <property type="evidence" value="ECO:0007669"/>
    <property type="project" value="UniProtKB-SubCell"/>
</dbReference>
<dbReference type="GO" id="GO:0048471">
    <property type="term" value="C:perinuclear region of cytoplasm"/>
    <property type="evidence" value="ECO:0000250"/>
    <property type="project" value="UniProtKB"/>
</dbReference>
<dbReference type="GO" id="GO:0044853">
    <property type="term" value="C:plasma membrane raft"/>
    <property type="evidence" value="ECO:0000250"/>
    <property type="project" value="UniProtKB"/>
</dbReference>
<dbReference type="GO" id="GO:0042383">
    <property type="term" value="C:sarcolemma"/>
    <property type="evidence" value="ECO:0007669"/>
    <property type="project" value="TreeGrafter"/>
</dbReference>
<dbReference type="GO" id="GO:0031748">
    <property type="term" value="F:D1 dopamine receptor binding"/>
    <property type="evidence" value="ECO:0000250"/>
    <property type="project" value="UniProtKB"/>
</dbReference>
<dbReference type="GO" id="GO:0060090">
    <property type="term" value="F:molecular adaptor activity"/>
    <property type="evidence" value="ECO:0007669"/>
    <property type="project" value="TreeGrafter"/>
</dbReference>
<dbReference type="GO" id="GO:0019901">
    <property type="term" value="F:protein kinase binding"/>
    <property type="evidence" value="ECO:0007669"/>
    <property type="project" value="TreeGrafter"/>
</dbReference>
<dbReference type="GO" id="GO:0070836">
    <property type="term" value="P:caveola assembly"/>
    <property type="evidence" value="ECO:0000250"/>
    <property type="project" value="UniProtKB"/>
</dbReference>
<dbReference type="GO" id="GO:0007029">
    <property type="term" value="P:endoplasmic reticulum organization"/>
    <property type="evidence" value="ECO:0000250"/>
    <property type="project" value="UniProtKB"/>
</dbReference>
<dbReference type="GO" id="GO:0008286">
    <property type="term" value="P:insulin receptor signaling pathway"/>
    <property type="evidence" value="ECO:0007669"/>
    <property type="project" value="TreeGrafter"/>
</dbReference>
<dbReference type="GO" id="GO:0007005">
    <property type="term" value="P:mitochondrion organization"/>
    <property type="evidence" value="ECO:0000250"/>
    <property type="project" value="UniProtKB"/>
</dbReference>
<dbReference type="GO" id="GO:0001937">
    <property type="term" value="P:negative regulation of endothelial cell proliferation"/>
    <property type="evidence" value="ECO:0000250"/>
    <property type="project" value="UniProtKB"/>
</dbReference>
<dbReference type="GO" id="GO:0060161">
    <property type="term" value="P:positive regulation of dopamine receptor signaling pathway"/>
    <property type="evidence" value="ECO:0000250"/>
    <property type="project" value="UniProtKB"/>
</dbReference>
<dbReference type="GO" id="GO:0051480">
    <property type="term" value="P:regulation of cytosolic calcium ion concentration"/>
    <property type="evidence" value="ECO:0007669"/>
    <property type="project" value="TreeGrafter"/>
</dbReference>
<dbReference type="GO" id="GO:0048741">
    <property type="term" value="P:skeletal muscle fiber development"/>
    <property type="evidence" value="ECO:0000250"/>
    <property type="project" value="UniProtKB"/>
</dbReference>
<dbReference type="GO" id="GO:0048278">
    <property type="term" value="P:vesicle docking"/>
    <property type="evidence" value="ECO:0000250"/>
    <property type="project" value="UniProtKB"/>
</dbReference>
<dbReference type="GO" id="GO:0006906">
    <property type="term" value="P:vesicle fusion"/>
    <property type="evidence" value="ECO:0000250"/>
    <property type="project" value="UniProtKB"/>
</dbReference>
<dbReference type="InterPro" id="IPR001612">
    <property type="entry name" value="Caveolin"/>
</dbReference>
<dbReference type="InterPro" id="IPR018361">
    <property type="entry name" value="Caveolin_CS"/>
</dbReference>
<dbReference type="PANTHER" id="PTHR10844">
    <property type="entry name" value="CAVEOLIN"/>
    <property type="match status" value="1"/>
</dbReference>
<dbReference type="PANTHER" id="PTHR10844:SF3">
    <property type="entry name" value="CAVEOLIN-2"/>
    <property type="match status" value="1"/>
</dbReference>
<dbReference type="Pfam" id="PF01146">
    <property type="entry name" value="Caveolin"/>
    <property type="match status" value="1"/>
</dbReference>
<dbReference type="PROSITE" id="PS01210">
    <property type="entry name" value="CAVEOLIN"/>
    <property type="match status" value="1"/>
</dbReference>
<feature type="chain" id="PRO_0000279734" description="Caveolin-2">
    <location>
        <begin position="1"/>
        <end position="162"/>
    </location>
</feature>
<feature type="topological domain" description="Cytoplasmic" evidence="4">
    <location>
        <begin position="1"/>
        <end position="86"/>
    </location>
</feature>
<feature type="intramembrane region" description="Helical" evidence="4">
    <location>
        <begin position="87"/>
        <end position="107"/>
    </location>
</feature>
<feature type="topological domain" description="Cytoplasmic" evidence="4">
    <location>
        <begin position="108"/>
        <end position="162"/>
    </location>
</feature>
<feature type="modified residue" description="Phosphotyrosine; by SRC" evidence="2">
    <location>
        <position position="19"/>
    </location>
</feature>
<feature type="modified residue" description="Phosphoserine" evidence="3">
    <location>
        <position position="20"/>
    </location>
</feature>
<feature type="modified residue" description="Phosphoserine" evidence="2">
    <location>
        <position position="23"/>
    </location>
</feature>
<feature type="modified residue" description="Phosphotyrosine; by SRC" evidence="2">
    <location>
        <position position="27"/>
    </location>
</feature>
<feature type="modified residue" description="Phosphoserine" evidence="2">
    <location>
        <position position="36"/>
    </location>
</feature>
<protein>
    <recommendedName>
        <fullName>Caveolin-2</fullName>
    </recommendedName>
</protein>
<comment type="function">
    <text evidence="1">May act as a scaffolding protein within caveolar membranes. Interacts directly with G-protein alpha subunits and can functionally regulate their activity. Acts as an accessory protein in conjunction with CAV1 in targeting to lipid rafts and driving caveolae formation. The Ser-36 phosphorylated form has a role in modulating mitosis in endothelial cells. Positive regulator of cellular mitogenesis of the MAPK signaling pathway. Required for the insulin-stimulated nuclear translocation and activation of MAPK1 and STAT3, and the subsequent regulation of cell cycle progression (By similarity).</text>
</comment>
<comment type="subunit">
    <text evidence="1">Monomer or homodimer (By similarity). Interacts with CAV1; the interaction forms a stable heterooligomeric complex that is required for targeting to lipid rafts and for caveolae formation. Tyrosine phosphorylated forms do not form heterooligomers with the Tyr-19-phosphorylated form existing as a monomer or dimer, and the Tyr-27-form as a monomer only. Interacts (tyrosine phosphorylated form) with the SH2 domain-containing proteins, RASA1, NCK1 and SRC. Interacts (tyrosine phosphorylated form) with INSR, the interaction (Tyr-27-phosphorylated form) is increased on insulin stimulation. Interacts (Tyr-19 phosphorylated form) with MAPK1 (phosphorylated form); the interaction, promoted by insulin, leads to nuclear location and MAPK1 activation. Interacts with STAT3; the interaction is increased on insulin-induced tyrosine phosphorylation leading to STAT activation (By similarity).</text>
</comment>
<comment type="subcellular location">
    <subcellularLocation>
        <location evidence="1">Nucleus</location>
    </subcellularLocation>
    <subcellularLocation>
        <location evidence="1">Cytoplasm</location>
    </subcellularLocation>
    <subcellularLocation>
        <location>Golgi apparatus membrane</location>
        <topology>Peripheral membrane protein</topology>
    </subcellularLocation>
    <subcellularLocation>
        <location>Cell membrane</location>
        <topology>Peripheral membrane protein</topology>
    </subcellularLocation>
    <subcellularLocation>
        <location>Membrane</location>
        <location>Caveola</location>
        <topology>Peripheral membrane protein</topology>
    </subcellularLocation>
    <text evidence="1">Potential hairpin-like structure in the membrane. Membrane protein of caveolae. Tyr-19-phosphorylated form is enriched at sites of cell-cell contact and is translocated to the nucleus in complex with MAPK1 in response to insulin (By similarity). Tyr-27-phosphorylated form is located both in the cytoplasm and plasma membrane. CAV1-mediated Ser-23-phosphorylated form locates to the plasma membrane. Ser-36-phosphorylated form resides in intracellular compartments.</text>
</comment>
<comment type="PTM">
    <text evidence="1">Phosphorylated on serine and tyrosine residues. CAV1 promotes phosphorylation on Ser-23 which then targets the complex to the plasma membrane, lipid rafts and caveolae. Phosphorylation on Ser-36 appears to modulate mitosis in endothelial cells (By similarity). Phosphorylation on both Tyr-19 and Tyr-27 is required for insulin-induced 'Ser-727' phosphorylation of STAT3 and its activation. Phosphorylation on Tyr-19 is required for insulin-induced phosphorylation of MAPK1 and DNA binding of STAT3. Tyrosine phosphorylation is induced by both EGF and insulin (By. similarity).</text>
</comment>
<comment type="similarity">
    <text evidence="5">Belongs to the caveolin family.</text>
</comment>